<evidence type="ECO:0000250" key="1"/>
<evidence type="ECO:0000255" key="2">
    <source>
        <dbReference type="HAMAP-Rule" id="MF_00100"/>
    </source>
</evidence>
<evidence type="ECO:0000256" key="3">
    <source>
        <dbReference type="SAM" id="MobiDB-lite"/>
    </source>
</evidence>
<organism>
    <name type="scientific">Amoebophilus asiaticus (strain 5a2)</name>
    <dbReference type="NCBI Taxonomy" id="452471"/>
    <lineage>
        <taxon>Bacteria</taxon>
        <taxon>Pseudomonadati</taxon>
        <taxon>Bacteroidota</taxon>
        <taxon>Cytophagia</taxon>
        <taxon>Cytophagales</taxon>
        <taxon>Amoebophilaceae</taxon>
        <taxon>Candidatus Amoebophilus</taxon>
    </lineage>
</organism>
<reference key="1">
    <citation type="journal article" date="2010" name="J. Bacteriol.">
        <title>The genome of the amoeba symbiont 'Candidatus Amoebophilus asiaticus' reveals common mechanisms for host cell interaction among amoeba-associated bacteria.</title>
        <authorList>
            <person name="Schmitz-Esser S."/>
            <person name="Tischler P."/>
            <person name="Arnold R."/>
            <person name="Montanaro J."/>
            <person name="Wagner M."/>
            <person name="Rattei T."/>
            <person name="Horn M."/>
        </authorList>
    </citation>
    <scope>NUCLEOTIDE SEQUENCE [LARGE SCALE GENOMIC DNA]</scope>
    <source>
        <strain>5a2</strain>
    </source>
</reference>
<comment type="function">
    <text evidence="2">One of the essential components for the initiation of protein synthesis. Protects formylmethionyl-tRNA from spontaneous hydrolysis and promotes its binding to the 30S ribosomal subunits. Also involved in the hydrolysis of GTP during the formation of the 70S ribosomal complex.</text>
</comment>
<comment type="subcellular location">
    <subcellularLocation>
        <location evidence="2">Cytoplasm</location>
    </subcellularLocation>
</comment>
<comment type="similarity">
    <text evidence="2">Belongs to the TRAFAC class translation factor GTPase superfamily. Classic translation factor GTPase family. IF-2 subfamily.</text>
</comment>
<feature type="chain" id="PRO_1000093756" description="Translation initiation factor IF-2">
    <location>
        <begin position="1"/>
        <end position="908"/>
    </location>
</feature>
<feature type="domain" description="tr-type G">
    <location>
        <begin position="407"/>
        <end position="577"/>
    </location>
</feature>
<feature type="region of interest" description="Disordered" evidence="3">
    <location>
        <begin position="123"/>
        <end position="154"/>
    </location>
</feature>
<feature type="region of interest" description="Disordered" evidence="3">
    <location>
        <begin position="212"/>
        <end position="278"/>
    </location>
</feature>
<feature type="region of interest" description="G1" evidence="1">
    <location>
        <begin position="416"/>
        <end position="423"/>
    </location>
</feature>
<feature type="region of interest" description="G2" evidence="1">
    <location>
        <begin position="441"/>
        <end position="445"/>
    </location>
</feature>
<feature type="region of interest" description="G3" evidence="1">
    <location>
        <begin position="463"/>
        <end position="466"/>
    </location>
</feature>
<feature type="region of interest" description="G4" evidence="1">
    <location>
        <begin position="517"/>
        <end position="520"/>
    </location>
</feature>
<feature type="region of interest" description="G5" evidence="1">
    <location>
        <begin position="553"/>
        <end position="555"/>
    </location>
</feature>
<feature type="binding site" evidence="2">
    <location>
        <begin position="416"/>
        <end position="423"/>
    </location>
    <ligand>
        <name>GTP</name>
        <dbReference type="ChEBI" id="CHEBI:37565"/>
    </ligand>
</feature>
<feature type="binding site" evidence="2">
    <location>
        <begin position="463"/>
        <end position="467"/>
    </location>
    <ligand>
        <name>GTP</name>
        <dbReference type="ChEBI" id="CHEBI:37565"/>
    </ligand>
</feature>
<feature type="binding site" evidence="2">
    <location>
        <begin position="517"/>
        <end position="520"/>
    </location>
    <ligand>
        <name>GTP</name>
        <dbReference type="ChEBI" id="CHEBI:37565"/>
    </ligand>
</feature>
<dbReference type="EMBL" id="CP001102">
    <property type="protein sequence ID" value="ACE05585.1"/>
    <property type="molecule type" value="Genomic_DNA"/>
</dbReference>
<dbReference type="RefSeq" id="WP_012472355.1">
    <property type="nucleotide sequence ID" value="NC_010830.1"/>
</dbReference>
<dbReference type="SMR" id="B3EUG6"/>
<dbReference type="STRING" id="452471.Aasi_0139"/>
<dbReference type="KEGG" id="aas:Aasi_0139"/>
<dbReference type="eggNOG" id="COG0532">
    <property type="taxonomic scope" value="Bacteria"/>
</dbReference>
<dbReference type="HOGENOM" id="CLU_006301_0_2_10"/>
<dbReference type="OrthoDB" id="9811804at2"/>
<dbReference type="Proteomes" id="UP000001227">
    <property type="component" value="Chromosome"/>
</dbReference>
<dbReference type="GO" id="GO:0005737">
    <property type="term" value="C:cytoplasm"/>
    <property type="evidence" value="ECO:0007669"/>
    <property type="project" value="UniProtKB-SubCell"/>
</dbReference>
<dbReference type="GO" id="GO:0005525">
    <property type="term" value="F:GTP binding"/>
    <property type="evidence" value="ECO:0007669"/>
    <property type="project" value="UniProtKB-KW"/>
</dbReference>
<dbReference type="GO" id="GO:0003924">
    <property type="term" value="F:GTPase activity"/>
    <property type="evidence" value="ECO:0007669"/>
    <property type="project" value="UniProtKB-UniRule"/>
</dbReference>
<dbReference type="GO" id="GO:0003743">
    <property type="term" value="F:translation initiation factor activity"/>
    <property type="evidence" value="ECO:0007669"/>
    <property type="project" value="UniProtKB-UniRule"/>
</dbReference>
<dbReference type="CDD" id="cd01887">
    <property type="entry name" value="IF2_eIF5B"/>
    <property type="match status" value="1"/>
</dbReference>
<dbReference type="CDD" id="cd03702">
    <property type="entry name" value="IF2_mtIF2_II"/>
    <property type="match status" value="1"/>
</dbReference>
<dbReference type="CDD" id="cd03692">
    <property type="entry name" value="mtIF2_IVc"/>
    <property type="match status" value="1"/>
</dbReference>
<dbReference type="FunFam" id="2.40.30.10:FF:000008">
    <property type="entry name" value="Translation initiation factor IF-2"/>
    <property type="match status" value="1"/>
</dbReference>
<dbReference type="FunFam" id="2.40.30.10:FF:000054">
    <property type="entry name" value="Translation initiation factor IF-2"/>
    <property type="match status" value="1"/>
</dbReference>
<dbReference type="FunFam" id="3.40.50.10050:FF:000001">
    <property type="entry name" value="Translation initiation factor IF-2"/>
    <property type="match status" value="1"/>
</dbReference>
<dbReference type="FunFam" id="3.40.50.300:FF:000019">
    <property type="entry name" value="Translation initiation factor IF-2"/>
    <property type="match status" value="1"/>
</dbReference>
<dbReference type="Gene3D" id="3.40.50.300">
    <property type="entry name" value="P-loop containing nucleotide triphosphate hydrolases"/>
    <property type="match status" value="1"/>
</dbReference>
<dbReference type="Gene3D" id="2.40.30.10">
    <property type="entry name" value="Translation factors"/>
    <property type="match status" value="2"/>
</dbReference>
<dbReference type="Gene3D" id="3.40.50.10050">
    <property type="entry name" value="Translation initiation factor IF- 2, domain 3"/>
    <property type="match status" value="1"/>
</dbReference>
<dbReference type="HAMAP" id="MF_00100_B">
    <property type="entry name" value="IF_2_B"/>
    <property type="match status" value="1"/>
</dbReference>
<dbReference type="InterPro" id="IPR053905">
    <property type="entry name" value="EF-G-like_DII"/>
</dbReference>
<dbReference type="InterPro" id="IPR044145">
    <property type="entry name" value="IF2_II"/>
</dbReference>
<dbReference type="InterPro" id="IPR006847">
    <property type="entry name" value="IF2_N"/>
</dbReference>
<dbReference type="InterPro" id="IPR027417">
    <property type="entry name" value="P-loop_NTPase"/>
</dbReference>
<dbReference type="InterPro" id="IPR005225">
    <property type="entry name" value="Small_GTP-bd"/>
</dbReference>
<dbReference type="InterPro" id="IPR000795">
    <property type="entry name" value="T_Tr_GTP-bd_dom"/>
</dbReference>
<dbReference type="InterPro" id="IPR000178">
    <property type="entry name" value="TF_IF2_bacterial-like"/>
</dbReference>
<dbReference type="InterPro" id="IPR015760">
    <property type="entry name" value="TIF_IF2"/>
</dbReference>
<dbReference type="InterPro" id="IPR023115">
    <property type="entry name" value="TIF_IF2_dom3"/>
</dbReference>
<dbReference type="InterPro" id="IPR036925">
    <property type="entry name" value="TIF_IF2_dom3_sf"/>
</dbReference>
<dbReference type="InterPro" id="IPR009000">
    <property type="entry name" value="Transl_B-barrel_sf"/>
</dbReference>
<dbReference type="NCBIfam" id="TIGR00487">
    <property type="entry name" value="IF-2"/>
    <property type="match status" value="1"/>
</dbReference>
<dbReference type="NCBIfam" id="TIGR00231">
    <property type="entry name" value="small_GTP"/>
    <property type="match status" value="1"/>
</dbReference>
<dbReference type="PANTHER" id="PTHR43381:SF5">
    <property type="entry name" value="TR-TYPE G DOMAIN-CONTAINING PROTEIN"/>
    <property type="match status" value="1"/>
</dbReference>
<dbReference type="PANTHER" id="PTHR43381">
    <property type="entry name" value="TRANSLATION INITIATION FACTOR IF-2-RELATED"/>
    <property type="match status" value="1"/>
</dbReference>
<dbReference type="Pfam" id="PF22042">
    <property type="entry name" value="EF-G_D2"/>
    <property type="match status" value="1"/>
</dbReference>
<dbReference type="Pfam" id="PF00009">
    <property type="entry name" value="GTP_EFTU"/>
    <property type="match status" value="1"/>
</dbReference>
<dbReference type="Pfam" id="PF11987">
    <property type="entry name" value="IF-2"/>
    <property type="match status" value="1"/>
</dbReference>
<dbReference type="Pfam" id="PF04760">
    <property type="entry name" value="IF2_N"/>
    <property type="match status" value="1"/>
</dbReference>
<dbReference type="SUPFAM" id="SSF52156">
    <property type="entry name" value="Initiation factor IF2/eIF5b, domain 3"/>
    <property type="match status" value="1"/>
</dbReference>
<dbReference type="SUPFAM" id="SSF52540">
    <property type="entry name" value="P-loop containing nucleoside triphosphate hydrolases"/>
    <property type="match status" value="1"/>
</dbReference>
<dbReference type="SUPFAM" id="SSF50447">
    <property type="entry name" value="Translation proteins"/>
    <property type="match status" value="2"/>
</dbReference>
<dbReference type="PROSITE" id="PS51722">
    <property type="entry name" value="G_TR_2"/>
    <property type="match status" value="1"/>
</dbReference>
<dbReference type="PROSITE" id="PS01176">
    <property type="entry name" value="IF2"/>
    <property type="match status" value="1"/>
</dbReference>
<proteinExistence type="inferred from homology"/>
<accession>B3EUG6</accession>
<keyword id="KW-0963">Cytoplasm</keyword>
<keyword id="KW-0342">GTP-binding</keyword>
<keyword id="KW-0396">Initiation factor</keyword>
<keyword id="KW-0547">Nucleotide-binding</keyword>
<keyword id="KW-0648">Protein biosynthesis</keyword>
<keyword id="KW-1185">Reference proteome</keyword>
<name>IF2_AMOA5</name>
<sequence length="908" mass="100503">MVEEKTIRLSQVARKLNVATTTIAAYLLEKGFRVENKPNTKITLEQYKILAEEFADSAMDKEEAAELVIGQSYEKEPKVIAKQQEPIKHVHPKEKQVEIEKISLPVIDAPTIIEHKIIEHKTEEPPILQPELPTEEKEELEVIESPQAPQEELKPELETEVQEQDKEIQQELDDTAKVEQAPITKGPEKIDFSKQGEFKGVTVLGKIELAEKKEPKKFQQVASSDIDKKNKKRPRKRVASETGLPSSGKREEEANRYKPKGKVTNKTPEAPKTAVSEKQIQDQIKSTLAKLGGGKNVASRAKYRREKRSLLAEEQAEERLQAAKDAKKLQVTEFIAASDLASLMGVSINQLLSTCMNLGMLVSINQRLDAEAITIIADEFGYQVAFTDVKTQELEEEEEANPEDLVERAPIVTIMGHVDHGKTSLLDYIRNTQITKTEAGGITQHIGAYEVVTESGKHIAFLDTPGHEAFTAMRARGAKLTDIAIIVIAADDGVRPQTKEAINHAKLAGVPIIIAINKMDKPQANPERVKEELAHLNILVEDWGGKYQSQGVSAISGEGVKELLEKILFEAELLELKANSHKKARGTVIEASLDQGRGYLATIMVQDGNLRIGDVVLAGAYYGKIKAMFDYQGKPVKQAGPSTPMQILGLNGAPQAGDLFRAMNTEKEARDIATQRQQILREQGFRTKTHITLDEIGRRLAIGNFKELNIILKGDVDGSVEALSDSLLKLSTEEIKVTILHKGVGAIVESDILLAAASDAIIIGFQVRPTPPVRKLAEKEGIEIRLYSIIYDAINDIKDAMEGMLAPTIEEIITGSASVREIFKITGTGTVAGCYVTEGYIKKNNSIRVIRDGIVIYTGSIKHLKHFKEEMQQVKTGFECGISITNFNDLKVNDVIEGFEQKEVERKL</sequence>
<protein>
    <recommendedName>
        <fullName evidence="2">Translation initiation factor IF-2</fullName>
    </recommendedName>
</protein>
<gene>
    <name evidence="2" type="primary">infB</name>
    <name type="ordered locus">Aasi_0139</name>
</gene>